<sequence>MYQELIRNELTEAAGVLQAFLADEQNLKNIEAAAKLLADSFKQEGKVLSCGNGGSHCDAMHFAEELTGRYRENRPGYAGIAISDPSHLSCVSNDFGYDYVFSRYVEAVGRRGDVLLGISTSGNSGNILKAIEAAHAKGMKVIALTGKDGGKMAGLADVEIRVPHFGYADRIQEVHIKVIHILIQLVEKEMAK</sequence>
<accession>A4SPH9</accession>
<comment type="function">
    <text evidence="1">Catalyzes the isomerization of sedoheptulose 7-phosphate in D-glycero-D-manno-heptose 7-phosphate.</text>
</comment>
<comment type="catalytic activity">
    <reaction evidence="1">
        <text>2 D-sedoheptulose 7-phosphate = D-glycero-alpha-D-manno-heptose 7-phosphate + D-glycero-beta-D-manno-heptose 7-phosphate</text>
        <dbReference type="Rhea" id="RHEA:27489"/>
        <dbReference type="ChEBI" id="CHEBI:57483"/>
        <dbReference type="ChEBI" id="CHEBI:60203"/>
        <dbReference type="ChEBI" id="CHEBI:60204"/>
        <dbReference type="EC" id="5.3.1.28"/>
    </reaction>
</comment>
<comment type="cofactor">
    <cofactor evidence="1">
        <name>Zn(2+)</name>
        <dbReference type="ChEBI" id="CHEBI:29105"/>
    </cofactor>
    <text evidence="1">Binds 1 zinc ion per subunit.</text>
</comment>
<comment type="pathway">
    <text evidence="1">Carbohydrate biosynthesis; D-glycero-D-manno-heptose 7-phosphate biosynthesis; D-glycero-alpha-D-manno-heptose 7-phosphate and D-glycero-beta-D-manno-heptose 7-phosphate from sedoheptulose 7-phosphate: step 1/1.</text>
</comment>
<comment type="subunit">
    <text evidence="1">Homotetramer.</text>
</comment>
<comment type="subcellular location">
    <subcellularLocation>
        <location evidence="1">Cytoplasm</location>
    </subcellularLocation>
</comment>
<comment type="miscellaneous">
    <text evidence="1">The reaction produces a racemic mixture of D-glycero-alpha-D-manno-heptose 7-phosphate and D-glycero-beta-D-manno-heptose 7-phosphate.</text>
</comment>
<comment type="similarity">
    <text evidence="1">Belongs to the SIS family. GmhA subfamily.</text>
</comment>
<organism>
    <name type="scientific">Aeromonas salmonicida (strain A449)</name>
    <dbReference type="NCBI Taxonomy" id="382245"/>
    <lineage>
        <taxon>Bacteria</taxon>
        <taxon>Pseudomonadati</taxon>
        <taxon>Pseudomonadota</taxon>
        <taxon>Gammaproteobacteria</taxon>
        <taxon>Aeromonadales</taxon>
        <taxon>Aeromonadaceae</taxon>
        <taxon>Aeromonas</taxon>
    </lineage>
</organism>
<name>GMHA_AERS4</name>
<keyword id="KW-0119">Carbohydrate metabolism</keyword>
<keyword id="KW-0963">Cytoplasm</keyword>
<keyword id="KW-0413">Isomerase</keyword>
<keyword id="KW-0479">Metal-binding</keyword>
<keyword id="KW-0862">Zinc</keyword>
<evidence type="ECO:0000255" key="1">
    <source>
        <dbReference type="HAMAP-Rule" id="MF_00067"/>
    </source>
</evidence>
<dbReference type="EC" id="5.3.1.28" evidence="1"/>
<dbReference type="EMBL" id="CP000644">
    <property type="protein sequence ID" value="ABO90801.1"/>
    <property type="molecule type" value="Genomic_DNA"/>
</dbReference>
<dbReference type="SMR" id="A4SPH9"/>
<dbReference type="STRING" id="29491.GCA_000820065_00028"/>
<dbReference type="KEGG" id="asa:ASA_2783"/>
<dbReference type="eggNOG" id="COG0279">
    <property type="taxonomic scope" value="Bacteria"/>
</dbReference>
<dbReference type="HOGENOM" id="CLU_080999_4_0_6"/>
<dbReference type="UniPathway" id="UPA00041">
    <property type="reaction ID" value="UER00436"/>
</dbReference>
<dbReference type="Proteomes" id="UP000000225">
    <property type="component" value="Chromosome"/>
</dbReference>
<dbReference type="GO" id="GO:0005737">
    <property type="term" value="C:cytoplasm"/>
    <property type="evidence" value="ECO:0007669"/>
    <property type="project" value="UniProtKB-SubCell"/>
</dbReference>
<dbReference type="GO" id="GO:0097367">
    <property type="term" value="F:carbohydrate derivative binding"/>
    <property type="evidence" value="ECO:0007669"/>
    <property type="project" value="InterPro"/>
</dbReference>
<dbReference type="GO" id="GO:0008968">
    <property type="term" value="F:D-sedoheptulose 7-phosphate isomerase activity"/>
    <property type="evidence" value="ECO:0007669"/>
    <property type="project" value="UniProtKB-UniRule"/>
</dbReference>
<dbReference type="GO" id="GO:0008270">
    <property type="term" value="F:zinc ion binding"/>
    <property type="evidence" value="ECO:0007669"/>
    <property type="project" value="UniProtKB-UniRule"/>
</dbReference>
<dbReference type="GO" id="GO:0005975">
    <property type="term" value="P:carbohydrate metabolic process"/>
    <property type="evidence" value="ECO:0007669"/>
    <property type="project" value="UniProtKB-UniRule"/>
</dbReference>
<dbReference type="GO" id="GO:2001061">
    <property type="term" value="P:D-glycero-D-manno-heptose 7-phosphate biosynthetic process"/>
    <property type="evidence" value="ECO:0007669"/>
    <property type="project" value="UniProtKB-UniPathway"/>
</dbReference>
<dbReference type="CDD" id="cd05006">
    <property type="entry name" value="SIS_GmhA"/>
    <property type="match status" value="1"/>
</dbReference>
<dbReference type="FunFam" id="3.40.50.10490:FF:000013">
    <property type="entry name" value="Phosphoheptose isomerase"/>
    <property type="match status" value="1"/>
</dbReference>
<dbReference type="Gene3D" id="3.40.50.10490">
    <property type="entry name" value="Glucose-6-phosphate isomerase like protein, domain 1"/>
    <property type="match status" value="1"/>
</dbReference>
<dbReference type="HAMAP" id="MF_00067">
    <property type="entry name" value="GmhA"/>
    <property type="match status" value="1"/>
</dbReference>
<dbReference type="InterPro" id="IPR035461">
    <property type="entry name" value="GmhA/DiaA"/>
</dbReference>
<dbReference type="InterPro" id="IPR004515">
    <property type="entry name" value="Phosphoheptose_Isoase"/>
</dbReference>
<dbReference type="InterPro" id="IPR001347">
    <property type="entry name" value="SIS_dom"/>
</dbReference>
<dbReference type="InterPro" id="IPR046348">
    <property type="entry name" value="SIS_dom_sf"/>
</dbReference>
<dbReference type="InterPro" id="IPR050099">
    <property type="entry name" value="SIS_GmhA/DiaA_subfam"/>
</dbReference>
<dbReference type="NCBIfam" id="TIGR00441">
    <property type="entry name" value="gmhA"/>
    <property type="match status" value="1"/>
</dbReference>
<dbReference type="NCBIfam" id="NF001628">
    <property type="entry name" value="PRK00414.1"/>
    <property type="match status" value="1"/>
</dbReference>
<dbReference type="PANTHER" id="PTHR30390:SF7">
    <property type="entry name" value="PHOSPHOHEPTOSE ISOMERASE"/>
    <property type="match status" value="1"/>
</dbReference>
<dbReference type="PANTHER" id="PTHR30390">
    <property type="entry name" value="SEDOHEPTULOSE 7-PHOSPHATE ISOMERASE / DNAA INITIATOR-ASSOCIATING FACTOR FOR REPLICATION INITIATION"/>
    <property type="match status" value="1"/>
</dbReference>
<dbReference type="Pfam" id="PF13580">
    <property type="entry name" value="SIS_2"/>
    <property type="match status" value="1"/>
</dbReference>
<dbReference type="SUPFAM" id="SSF53697">
    <property type="entry name" value="SIS domain"/>
    <property type="match status" value="1"/>
</dbReference>
<dbReference type="PROSITE" id="PS51464">
    <property type="entry name" value="SIS"/>
    <property type="match status" value="1"/>
</dbReference>
<gene>
    <name evidence="1" type="primary">gmhA</name>
    <name type="ordered locus">ASA_2783</name>
</gene>
<protein>
    <recommendedName>
        <fullName evidence="1">Phosphoheptose isomerase</fullName>
        <ecNumber evidence="1">5.3.1.28</ecNumber>
    </recommendedName>
    <alternativeName>
        <fullName evidence="1">Sedoheptulose 7-phosphate isomerase</fullName>
    </alternativeName>
</protein>
<proteinExistence type="inferred from homology"/>
<feature type="chain" id="PRO_1000009048" description="Phosphoheptose isomerase">
    <location>
        <begin position="1"/>
        <end position="192"/>
    </location>
</feature>
<feature type="domain" description="SIS" evidence="1">
    <location>
        <begin position="37"/>
        <end position="192"/>
    </location>
</feature>
<feature type="binding site" evidence="1">
    <location>
        <begin position="52"/>
        <end position="54"/>
    </location>
    <ligand>
        <name>substrate</name>
    </ligand>
</feature>
<feature type="binding site" evidence="1">
    <location>
        <position position="61"/>
    </location>
    <ligand>
        <name>Zn(2+)</name>
        <dbReference type="ChEBI" id="CHEBI:29105"/>
    </ligand>
</feature>
<feature type="binding site" evidence="1">
    <location>
        <position position="65"/>
    </location>
    <ligand>
        <name>substrate</name>
    </ligand>
</feature>
<feature type="binding site" evidence="1">
    <location>
        <position position="65"/>
    </location>
    <ligand>
        <name>Zn(2+)</name>
        <dbReference type="ChEBI" id="CHEBI:29105"/>
    </ligand>
</feature>
<feature type="binding site" evidence="1">
    <location>
        <begin position="93"/>
        <end position="94"/>
    </location>
    <ligand>
        <name>substrate</name>
    </ligand>
</feature>
<feature type="binding site" evidence="1">
    <location>
        <begin position="119"/>
        <end position="121"/>
    </location>
    <ligand>
        <name>substrate</name>
    </ligand>
</feature>
<feature type="binding site" evidence="1">
    <location>
        <position position="124"/>
    </location>
    <ligand>
        <name>substrate</name>
    </ligand>
</feature>
<feature type="binding site" evidence="1">
    <location>
        <position position="172"/>
    </location>
    <ligand>
        <name>substrate</name>
    </ligand>
</feature>
<feature type="binding site" evidence="1">
    <location>
        <position position="172"/>
    </location>
    <ligand>
        <name>Zn(2+)</name>
        <dbReference type="ChEBI" id="CHEBI:29105"/>
    </ligand>
</feature>
<feature type="binding site" evidence="1">
    <location>
        <position position="180"/>
    </location>
    <ligand>
        <name>Zn(2+)</name>
        <dbReference type="ChEBI" id="CHEBI:29105"/>
    </ligand>
</feature>
<reference key="1">
    <citation type="journal article" date="2008" name="BMC Genomics">
        <title>The genome of Aeromonas salmonicida subsp. salmonicida A449: insights into the evolution of a fish pathogen.</title>
        <authorList>
            <person name="Reith M.E."/>
            <person name="Singh R.K."/>
            <person name="Curtis B."/>
            <person name="Boyd J.M."/>
            <person name="Bouevitch A."/>
            <person name="Kimball J."/>
            <person name="Munholland J."/>
            <person name="Murphy C."/>
            <person name="Sarty D."/>
            <person name="Williams J."/>
            <person name="Nash J.H."/>
            <person name="Johnson S.C."/>
            <person name="Brown L.L."/>
        </authorList>
    </citation>
    <scope>NUCLEOTIDE SEQUENCE [LARGE SCALE GENOMIC DNA]</scope>
    <source>
        <strain>A449</strain>
    </source>
</reference>